<sequence length="213" mass="22677">MSTIVKICGLTTADTLEAAVEAGADMVGFVFFPASPRHLDIDFADALGRQVRSRAAKVALTVDADDDLLDAIVEQLRPNWLQFHGSESPERVRSIKRIYGLPVMKAIAVAGPDDLSVLPDYAAVADRILFDARPPKDATRPGGLGAAFDWKLLDGVNLKLPFLVSGGINAGNVAEALRVTRAQGVDVSSGVETSPGEKDPDLIRDFIRAARAA</sequence>
<accession>Q6NDN7</accession>
<protein>
    <recommendedName>
        <fullName evidence="1">N-(5'-phosphoribosyl)anthranilate isomerase</fullName>
        <shortName evidence="1">PRAI</shortName>
        <ecNumber evidence="1">5.3.1.24</ecNumber>
    </recommendedName>
</protein>
<reference key="1">
    <citation type="journal article" date="2004" name="Nat. Biotechnol.">
        <title>Complete genome sequence of the metabolically versatile photosynthetic bacterium Rhodopseudomonas palustris.</title>
        <authorList>
            <person name="Larimer F.W."/>
            <person name="Chain P."/>
            <person name="Hauser L."/>
            <person name="Lamerdin J.E."/>
            <person name="Malfatti S."/>
            <person name="Do L."/>
            <person name="Land M.L."/>
            <person name="Pelletier D.A."/>
            <person name="Beatty J.T."/>
            <person name="Lang A.S."/>
            <person name="Tabita F.R."/>
            <person name="Gibson J.L."/>
            <person name="Hanson T.E."/>
            <person name="Bobst C."/>
            <person name="Torres y Torres J.L."/>
            <person name="Peres C."/>
            <person name="Harrison F.H."/>
            <person name="Gibson J."/>
            <person name="Harwood C.S."/>
        </authorList>
    </citation>
    <scope>NUCLEOTIDE SEQUENCE [LARGE SCALE GENOMIC DNA]</scope>
    <source>
        <strain>ATCC BAA-98 / CGA009</strain>
    </source>
</reference>
<proteinExistence type="inferred from homology"/>
<evidence type="ECO:0000255" key="1">
    <source>
        <dbReference type="HAMAP-Rule" id="MF_00135"/>
    </source>
</evidence>
<gene>
    <name evidence="1" type="primary">trpF</name>
    <name type="ordered locus">RPA0068</name>
</gene>
<feature type="chain" id="PRO_1000018633" description="N-(5'-phosphoribosyl)anthranilate isomerase">
    <location>
        <begin position="1"/>
        <end position="213"/>
    </location>
</feature>
<dbReference type="EC" id="5.3.1.24" evidence="1"/>
<dbReference type="EMBL" id="BX572593">
    <property type="protein sequence ID" value="CAE25512.1"/>
    <property type="molecule type" value="Genomic_DNA"/>
</dbReference>
<dbReference type="RefSeq" id="WP_011155639.1">
    <property type="nucleotide sequence ID" value="NZ_CP116810.1"/>
</dbReference>
<dbReference type="SMR" id="Q6NDN7"/>
<dbReference type="STRING" id="258594.RPA0068"/>
<dbReference type="GeneID" id="66891069"/>
<dbReference type="eggNOG" id="COG0135">
    <property type="taxonomic scope" value="Bacteria"/>
</dbReference>
<dbReference type="HOGENOM" id="CLU_076364_1_1_5"/>
<dbReference type="PhylomeDB" id="Q6NDN7"/>
<dbReference type="UniPathway" id="UPA00035">
    <property type="reaction ID" value="UER00042"/>
</dbReference>
<dbReference type="GO" id="GO:0004640">
    <property type="term" value="F:phosphoribosylanthranilate isomerase activity"/>
    <property type="evidence" value="ECO:0007669"/>
    <property type="project" value="UniProtKB-UniRule"/>
</dbReference>
<dbReference type="GO" id="GO:0000162">
    <property type="term" value="P:L-tryptophan biosynthetic process"/>
    <property type="evidence" value="ECO:0007669"/>
    <property type="project" value="UniProtKB-UniRule"/>
</dbReference>
<dbReference type="CDD" id="cd00405">
    <property type="entry name" value="PRAI"/>
    <property type="match status" value="1"/>
</dbReference>
<dbReference type="Gene3D" id="3.20.20.70">
    <property type="entry name" value="Aldolase class I"/>
    <property type="match status" value="1"/>
</dbReference>
<dbReference type="HAMAP" id="MF_00135">
    <property type="entry name" value="PRAI"/>
    <property type="match status" value="1"/>
</dbReference>
<dbReference type="InterPro" id="IPR013785">
    <property type="entry name" value="Aldolase_TIM"/>
</dbReference>
<dbReference type="InterPro" id="IPR001240">
    <property type="entry name" value="PRAI_dom"/>
</dbReference>
<dbReference type="InterPro" id="IPR011060">
    <property type="entry name" value="RibuloseP-bd_barrel"/>
</dbReference>
<dbReference type="InterPro" id="IPR044643">
    <property type="entry name" value="TrpF_fam"/>
</dbReference>
<dbReference type="NCBIfam" id="NF002295">
    <property type="entry name" value="PRK01222.1-1"/>
    <property type="match status" value="1"/>
</dbReference>
<dbReference type="PANTHER" id="PTHR42894">
    <property type="entry name" value="N-(5'-PHOSPHORIBOSYL)ANTHRANILATE ISOMERASE"/>
    <property type="match status" value="1"/>
</dbReference>
<dbReference type="PANTHER" id="PTHR42894:SF1">
    <property type="entry name" value="N-(5'-PHOSPHORIBOSYL)ANTHRANILATE ISOMERASE"/>
    <property type="match status" value="1"/>
</dbReference>
<dbReference type="Pfam" id="PF00697">
    <property type="entry name" value="PRAI"/>
    <property type="match status" value="1"/>
</dbReference>
<dbReference type="SUPFAM" id="SSF51366">
    <property type="entry name" value="Ribulose-phoshate binding barrel"/>
    <property type="match status" value="1"/>
</dbReference>
<name>TRPF_RHOPA</name>
<keyword id="KW-0028">Amino-acid biosynthesis</keyword>
<keyword id="KW-0057">Aromatic amino acid biosynthesis</keyword>
<keyword id="KW-0413">Isomerase</keyword>
<keyword id="KW-0822">Tryptophan biosynthesis</keyword>
<comment type="catalytic activity">
    <reaction evidence="1">
        <text>N-(5-phospho-beta-D-ribosyl)anthranilate = 1-(2-carboxyphenylamino)-1-deoxy-D-ribulose 5-phosphate</text>
        <dbReference type="Rhea" id="RHEA:21540"/>
        <dbReference type="ChEBI" id="CHEBI:18277"/>
        <dbReference type="ChEBI" id="CHEBI:58613"/>
        <dbReference type="EC" id="5.3.1.24"/>
    </reaction>
</comment>
<comment type="pathway">
    <text evidence="1">Amino-acid biosynthesis; L-tryptophan biosynthesis; L-tryptophan from chorismate: step 3/5.</text>
</comment>
<comment type="similarity">
    <text evidence="1">Belongs to the TrpF family.</text>
</comment>
<organism>
    <name type="scientific">Rhodopseudomonas palustris (strain ATCC BAA-98 / CGA009)</name>
    <dbReference type="NCBI Taxonomy" id="258594"/>
    <lineage>
        <taxon>Bacteria</taxon>
        <taxon>Pseudomonadati</taxon>
        <taxon>Pseudomonadota</taxon>
        <taxon>Alphaproteobacteria</taxon>
        <taxon>Hyphomicrobiales</taxon>
        <taxon>Nitrobacteraceae</taxon>
        <taxon>Rhodopseudomonas</taxon>
    </lineage>
</organism>